<proteinExistence type="inferred from homology"/>
<accession>A4FWU0</accession>
<organism>
    <name type="scientific">Methanococcus maripaludis (strain C5 / ATCC BAA-1333)</name>
    <dbReference type="NCBI Taxonomy" id="402880"/>
    <lineage>
        <taxon>Archaea</taxon>
        <taxon>Methanobacteriati</taxon>
        <taxon>Methanobacteriota</taxon>
        <taxon>Methanomada group</taxon>
        <taxon>Methanococci</taxon>
        <taxon>Methanococcales</taxon>
        <taxon>Methanococcaceae</taxon>
        <taxon>Methanococcus</taxon>
    </lineage>
</organism>
<gene>
    <name evidence="1" type="primary">bioB</name>
    <name type="ordered locus">MmarC5_0353</name>
</gene>
<sequence length="327" mass="36989">MKEIKLNSDSLEIYEKSASKKLNRNDLIDLWNLDLNDLLDISYALKKLFNKDKIDLCSIMNAKSGICPENCIFCSQSKHNSSKIDTYELKSKEEILKNAKSVEKYSNRFSIVVSGKTVTDLEFEKIIESIEEIQNKTKLKVCVSLGLLNKDQLKALNEKNVRIHNNLETSENYFKNICTTHDYNDKIKVILEAKKIGLEMCSGGIFGMGESIDDRINLFLDLKKLGVDSIALNLLNPIYGTKIYDRINSGDISPINSIGALKSLCIARITLPNKVIRLCGGREHVLKDMQKYSLLAIDGLMIGNYLTTNGQNIQSDLKMIEEMGFER</sequence>
<reference key="1">
    <citation type="submission" date="2007-03" db="EMBL/GenBank/DDBJ databases">
        <title>Complete sequence of chromosome of Methanococcus maripaludis C5.</title>
        <authorList>
            <consortium name="US DOE Joint Genome Institute"/>
            <person name="Copeland A."/>
            <person name="Lucas S."/>
            <person name="Lapidus A."/>
            <person name="Barry K."/>
            <person name="Glavina del Rio T."/>
            <person name="Dalin E."/>
            <person name="Tice H."/>
            <person name="Pitluck S."/>
            <person name="Chertkov O."/>
            <person name="Brettin T."/>
            <person name="Bruce D."/>
            <person name="Han C."/>
            <person name="Detter J.C."/>
            <person name="Schmutz J."/>
            <person name="Larimer F."/>
            <person name="Land M."/>
            <person name="Hauser L."/>
            <person name="Kyrpides N."/>
            <person name="Mikhailova N."/>
            <person name="Sieprawska-Lupa M."/>
            <person name="Whitman W.B."/>
            <person name="Richardson P."/>
        </authorList>
    </citation>
    <scope>NUCLEOTIDE SEQUENCE [LARGE SCALE GENOMIC DNA]</scope>
    <source>
        <strain>C5 / ATCC BAA-1333</strain>
    </source>
</reference>
<dbReference type="EC" id="2.8.1.6" evidence="1"/>
<dbReference type="EMBL" id="CP000609">
    <property type="protein sequence ID" value="ABO34669.1"/>
    <property type="molecule type" value="Genomic_DNA"/>
</dbReference>
<dbReference type="RefSeq" id="WP_011868124.1">
    <property type="nucleotide sequence ID" value="NC_009135.1"/>
</dbReference>
<dbReference type="SMR" id="A4FWU0"/>
<dbReference type="STRING" id="402880.MmarC5_0353"/>
<dbReference type="GeneID" id="4928010"/>
<dbReference type="KEGG" id="mmq:MmarC5_0353"/>
<dbReference type="eggNOG" id="arCOG00658">
    <property type="taxonomic scope" value="Archaea"/>
</dbReference>
<dbReference type="HOGENOM" id="CLU_033172_2_1_2"/>
<dbReference type="OrthoDB" id="9264at2157"/>
<dbReference type="UniPathway" id="UPA00078">
    <property type="reaction ID" value="UER00162"/>
</dbReference>
<dbReference type="Proteomes" id="UP000000253">
    <property type="component" value="Chromosome"/>
</dbReference>
<dbReference type="GO" id="GO:0051537">
    <property type="term" value="F:2 iron, 2 sulfur cluster binding"/>
    <property type="evidence" value="ECO:0007669"/>
    <property type="project" value="UniProtKB-KW"/>
</dbReference>
<dbReference type="GO" id="GO:0051539">
    <property type="term" value="F:4 iron, 4 sulfur cluster binding"/>
    <property type="evidence" value="ECO:0007669"/>
    <property type="project" value="UniProtKB-KW"/>
</dbReference>
<dbReference type="GO" id="GO:0004076">
    <property type="term" value="F:biotin synthase activity"/>
    <property type="evidence" value="ECO:0007669"/>
    <property type="project" value="UniProtKB-UniRule"/>
</dbReference>
<dbReference type="GO" id="GO:0005506">
    <property type="term" value="F:iron ion binding"/>
    <property type="evidence" value="ECO:0007669"/>
    <property type="project" value="UniProtKB-UniRule"/>
</dbReference>
<dbReference type="GO" id="GO:0009102">
    <property type="term" value="P:biotin biosynthetic process"/>
    <property type="evidence" value="ECO:0007669"/>
    <property type="project" value="UniProtKB-UniRule"/>
</dbReference>
<dbReference type="CDD" id="cd01335">
    <property type="entry name" value="Radical_SAM"/>
    <property type="match status" value="1"/>
</dbReference>
<dbReference type="FunFam" id="3.20.20.70:FF:000605">
    <property type="match status" value="1"/>
</dbReference>
<dbReference type="Gene3D" id="3.20.20.70">
    <property type="entry name" value="Aldolase class I"/>
    <property type="match status" value="1"/>
</dbReference>
<dbReference type="HAMAP" id="MF_01694">
    <property type="entry name" value="BioB"/>
    <property type="match status" value="1"/>
</dbReference>
<dbReference type="InterPro" id="IPR013785">
    <property type="entry name" value="Aldolase_TIM"/>
</dbReference>
<dbReference type="InterPro" id="IPR010722">
    <property type="entry name" value="BATS_dom"/>
</dbReference>
<dbReference type="InterPro" id="IPR002684">
    <property type="entry name" value="Biotin_synth/BioAB"/>
</dbReference>
<dbReference type="InterPro" id="IPR024177">
    <property type="entry name" value="Biotin_synthase"/>
</dbReference>
<dbReference type="InterPro" id="IPR006638">
    <property type="entry name" value="Elp3/MiaA/NifB-like_rSAM"/>
</dbReference>
<dbReference type="InterPro" id="IPR007197">
    <property type="entry name" value="rSAM"/>
</dbReference>
<dbReference type="NCBIfam" id="TIGR00433">
    <property type="entry name" value="bioB"/>
    <property type="match status" value="1"/>
</dbReference>
<dbReference type="PANTHER" id="PTHR22976">
    <property type="entry name" value="BIOTIN SYNTHASE"/>
    <property type="match status" value="1"/>
</dbReference>
<dbReference type="PANTHER" id="PTHR22976:SF2">
    <property type="entry name" value="BIOTIN SYNTHASE, MITOCHONDRIAL"/>
    <property type="match status" value="1"/>
</dbReference>
<dbReference type="Pfam" id="PF06968">
    <property type="entry name" value="BATS"/>
    <property type="match status" value="1"/>
</dbReference>
<dbReference type="Pfam" id="PF04055">
    <property type="entry name" value="Radical_SAM"/>
    <property type="match status" value="1"/>
</dbReference>
<dbReference type="PIRSF" id="PIRSF001619">
    <property type="entry name" value="Biotin_synth"/>
    <property type="match status" value="1"/>
</dbReference>
<dbReference type="SFLD" id="SFLDG01278">
    <property type="entry name" value="biotin_synthase_like"/>
    <property type="match status" value="1"/>
</dbReference>
<dbReference type="SFLD" id="SFLDS00029">
    <property type="entry name" value="Radical_SAM"/>
    <property type="match status" value="1"/>
</dbReference>
<dbReference type="SMART" id="SM00876">
    <property type="entry name" value="BATS"/>
    <property type="match status" value="1"/>
</dbReference>
<dbReference type="SMART" id="SM00729">
    <property type="entry name" value="Elp3"/>
    <property type="match status" value="1"/>
</dbReference>
<dbReference type="SUPFAM" id="SSF102114">
    <property type="entry name" value="Radical SAM enzymes"/>
    <property type="match status" value="1"/>
</dbReference>
<dbReference type="PROSITE" id="PS51918">
    <property type="entry name" value="RADICAL_SAM"/>
    <property type="match status" value="1"/>
</dbReference>
<comment type="function">
    <text evidence="1">Catalyzes the conversion of dethiobiotin (DTB) to biotin by the insertion of a sulfur atom into dethiobiotin via a radical-based mechanism.</text>
</comment>
<comment type="catalytic activity">
    <reaction evidence="1">
        <text>(4R,5S)-dethiobiotin + (sulfur carrier)-SH + 2 reduced [2Fe-2S]-[ferredoxin] + 2 S-adenosyl-L-methionine = (sulfur carrier)-H + biotin + 2 5'-deoxyadenosine + 2 L-methionine + 2 oxidized [2Fe-2S]-[ferredoxin]</text>
        <dbReference type="Rhea" id="RHEA:22060"/>
        <dbReference type="Rhea" id="RHEA-COMP:10000"/>
        <dbReference type="Rhea" id="RHEA-COMP:10001"/>
        <dbReference type="Rhea" id="RHEA-COMP:14737"/>
        <dbReference type="Rhea" id="RHEA-COMP:14739"/>
        <dbReference type="ChEBI" id="CHEBI:17319"/>
        <dbReference type="ChEBI" id="CHEBI:29917"/>
        <dbReference type="ChEBI" id="CHEBI:33737"/>
        <dbReference type="ChEBI" id="CHEBI:33738"/>
        <dbReference type="ChEBI" id="CHEBI:57586"/>
        <dbReference type="ChEBI" id="CHEBI:57844"/>
        <dbReference type="ChEBI" id="CHEBI:59789"/>
        <dbReference type="ChEBI" id="CHEBI:64428"/>
        <dbReference type="ChEBI" id="CHEBI:149473"/>
        <dbReference type="EC" id="2.8.1.6"/>
    </reaction>
</comment>
<comment type="cofactor">
    <cofactor evidence="1">
        <name>[4Fe-4S] cluster</name>
        <dbReference type="ChEBI" id="CHEBI:49883"/>
    </cofactor>
    <text evidence="1">Binds 1 [4Fe-4S] cluster. The cluster is coordinated with 3 cysteines and an exchangeable S-adenosyl-L-methionine.</text>
</comment>
<comment type="cofactor">
    <cofactor evidence="1">
        <name>[2Fe-2S] cluster</name>
        <dbReference type="ChEBI" id="CHEBI:190135"/>
    </cofactor>
    <text evidence="1">Binds 1 [2Fe-2S] cluster. The cluster is coordinated with 3 cysteines and 1 arginine.</text>
</comment>
<comment type="pathway">
    <text evidence="1">Cofactor biosynthesis; biotin biosynthesis; biotin from 7,8-diaminononanoate: step 2/2.</text>
</comment>
<comment type="subunit">
    <text evidence="1">Homodimer.</text>
</comment>
<comment type="similarity">
    <text evidence="1">Belongs to the radical SAM superfamily. Biotin synthase family.</text>
</comment>
<name>BIOB_METM5</name>
<evidence type="ECO:0000255" key="1">
    <source>
        <dbReference type="HAMAP-Rule" id="MF_01694"/>
    </source>
</evidence>
<evidence type="ECO:0000255" key="2">
    <source>
        <dbReference type="PROSITE-ProRule" id="PRU01266"/>
    </source>
</evidence>
<feature type="chain" id="PRO_0000381463" description="Biotin synthase">
    <location>
        <begin position="1"/>
        <end position="327"/>
    </location>
</feature>
<feature type="domain" description="Radical SAM core" evidence="2">
    <location>
        <begin position="49"/>
        <end position="282"/>
    </location>
</feature>
<feature type="binding site" evidence="1">
    <location>
        <position position="67"/>
    </location>
    <ligand>
        <name>[4Fe-4S] cluster</name>
        <dbReference type="ChEBI" id="CHEBI:49883"/>
        <note>4Fe-4S-S-AdoMet</note>
    </ligand>
</feature>
<feature type="binding site" evidence="1">
    <location>
        <position position="71"/>
    </location>
    <ligand>
        <name>[4Fe-4S] cluster</name>
        <dbReference type="ChEBI" id="CHEBI:49883"/>
        <note>4Fe-4S-S-AdoMet</note>
    </ligand>
</feature>
<feature type="binding site" evidence="1">
    <location>
        <position position="74"/>
    </location>
    <ligand>
        <name>[4Fe-4S] cluster</name>
        <dbReference type="ChEBI" id="CHEBI:49883"/>
        <note>4Fe-4S-S-AdoMet</note>
    </ligand>
</feature>
<feature type="binding site" evidence="1">
    <location>
        <position position="110"/>
    </location>
    <ligand>
        <name>[2Fe-2S] cluster</name>
        <dbReference type="ChEBI" id="CHEBI:190135"/>
    </ligand>
</feature>
<feature type="binding site" evidence="1">
    <location>
        <position position="142"/>
    </location>
    <ligand>
        <name>[2Fe-2S] cluster</name>
        <dbReference type="ChEBI" id="CHEBI:190135"/>
    </ligand>
</feature>
<feature type="binding site" evidence="1">
    <location>
        <position position="201"/>
    </location>
    <ligand>
        <name>[2Fe-2S] cluster</name>
        <dbReference type="ChEBI" id="CHEBI:190135"/>
    </ligand>
</feature>
<feature type="binding site" evidence="1">
    <location>
        <position position="277"/>
    </location>
    <ligand>
        <name>[2Fe-2S] cluster</name>
        <dbReference type="ChEBI" id="CHEBI:190135"/>
    </ligand>
</feature>
<protein>
    <recommendedName>
        <fullName evidence="1">Biotin synthase</fullName>
        <ecNumber evidence="1">2.8.1.6</ecNumber>
    </recommendedName>
</protein>
<keyword id="KW-0001">2Fe-2S</keyword>
<keyword id="KW-0004">4Fe-4S</keyword>
<keyword id="KW-0093">Biotin biosynthesis</keyword>
<keyword id="KW-0408">Iron</keyword>
<keyword id="KW-0411">Iron-sulfur</keyword>
<keyword id="KW-0479">Metal-binding</keyword>
<keyword id="KW-0949">S-adenosyl-L-methionine</keyword>
<keyword id="KW-0808">Transferase</keyword>